<gene>
    <name evidence="1" type="primary">thrS</name>
    <name type="ordered locus">ZMO0765</name>
</gene>
<sequence length="659" mass="74873">MAEKIRITLIDNSEREVLQGTTTTQIAASISTSLAKKALAARFNGQMIDLSQPLLEDGRLEIITAENEAEALELVRHDYAHILAEAVQKLFPGTQITFGPVTDDGFYYDFAPKDRPFTEEDLPLIEAEMRKIIAQNNALVREVWERDKLISLWESQGEKFKAEWAKELPEGQELTIYRAGEWFDMCRGPHLPSTGKLDPKAFKLTRVSGAYWRGDQNNAMLSRIYGTGWLNAKQLKAHLERLEEAQKRDHRRLGQEMDLFHLQQEAQGSVFWHPNGYTIWLQLEAYLRRRMKNANYKEVKTPQLMDAALWEASGHWGKFRENMFVVPDEIPSTDPDKPVLSGKGNLMALKPMNCPAHIQIFKQGIRSYRELPLRMLEFGCCHRNEAHGALHGLMRVRQLTQDDAHIFCTAEQIVTETKDFVNLLDSIYRDLGFTSYAVKLSLRPELRAGDDELWDNAENGLRSALEQVGITDYEELPGEGAFYGPKLEFHLTDAIGRTWQCGTLQLDYVLPERLDASYVAEDGSRKRPVMLHRAIIGTFERFIGILIEHHAGRFPLWMAPVQAVVATIVSEADSFAESVVEKMKAAGLRVVSDIRNEKINYKIREHSLTKVPNILVVGKREAEEGKVAIRKLGSRDQIILSVDEAIALLLEEATPPDLK</sequence>
<dbReference type="EC" id="6.1.1.3" evidence="1"/>
<dbReference type="EMBL" id="AE008692">
    <property type="protein sequence ID" value="AAV89389.1"/>
    <property type="molecule type" value="Genomic_DNA"/>
</dbReference>
<dbReference type="RefSeq" id="WP_011240643.1">
    <property type="nucleotide sequence ID" value="NZ_CP035711.1"/>
</dbReference>
<dbReference type="SMR" id="Q5NPH1"/>
<dbReference type="STRING" id="264203.ZMO0765"/>
<dbReference type="GeneID" id="79904069"/>
<dbReference type="KEGG" id="zmo:ZMO0765"/>
<dbReference type="eggNOG" id="COG0441">
    <property type="taxonomic scope" value="Bacteria"/>
</dbReference>
<dbReference type="HOGENOM" id="CLU_008554_0_1_5"/>
<dbReference type="Proteomes" id="UP000001173">
    <property type="component" value="Chromosome"/>
</dbReference>
<dbReference type="GO" id="GO:0005737">
    <property type="term" value="C:cytoplasm"/>
    <property type="evidence" value="ECO:0007669"/>
    <property type="project" value="UniProtKB-SubCell"/>
</dbReference>
<dbReference type="GO" id="GO:0005524">
    <property type="term" value="F:ATP binding"/>
    <property type="evidence" value="ECO:0007669"/>
    <property type="project" value="UniProtKB-UniRule"/>
</dbReference>
<dbReference type="GO" id="GO:0046872">
    <property type="term" value="F:metal ion binding"/>
    <property type="evidence" value="ECO:0007669"/>
    <property type="project" value="UniProtKB-KW"/>
</dbReference>
<dbReference type="GO" id="GO:0004829">
    <property type="term" value="F:threonine-tRNA ligase activity"/>
    <property type="evidence" value="ECO:0007669"/>
    <property type="project" value="UniProtKB-UniRule"/>
</dbReference>
<dbReference type="GO" id="GO:0000049">
    <property type="term" value="F:tRNA binding"/>
    <property type="evidence" value="ECO:0007669"/>
    <property type="project" value="UniProtKB-KW"/>
</dbReference>
<dbReference type="GO" id="GO:0006435">
    <property type="term" value="P:threonyl-tRNA aminoacylation"/>
    <property type="evidence" value="ECO:0007669"/>
    <property type="project" value="UniProtKB-UniRule"/>
</dbReference>
<dbReference type="CDD" id="cd01667">
    <property type="entry name" value="TGS_ThrRS"/>
    <property type="match status" value="1"/>
</dbReference>
<dbReference type="CDD" id="cd00860">
    <property type="entry name" value="ThrRS_anticodon"/>
    <property type="match status" value="1"/>
</dbReference>
<dbReference type="CDD" id="cd00771">
    <property type="entry name" value="ThrRS_core"/>
    <property type="match status" value="1"/>
</dbReference>
<dbReference type="FunFam" id="3.30.930.10:FF:000002">
    <property type="entry name" value="Threonine--tRNA ligase"/>
    <property type="match status" value="1"/>
</dbReference>
<dbReference type="FunFam" id="3.40.50.800:FF:000001">
    <property type="entry name" value="Threonine--tRNA ligase"/>
    <property type="match status" value="1"/>
</dbReference>
<dbReference type="FunFam" id="3.30.980.10:FF:000005">
    <property type="entry name" value="Threonyl-tRNA synthetase, mitochondrial"/>
    <property type="match status" value="1"/>
</dbReference>
<dbReference type="Gene3D" id="3.10.20.30">
    <property type="match status" value="1"/>
</dbReference>
<dbReference type="Gene3D" id="3.30.54.20">
    <property type="match status" value="1"/>
</dbReference>
<dbReference type="Gene3D" id="3.40.50.800">
    <property type="entry name" value="Anticodon-binding domain"/>
    <property type="match status" value="1"/>
</dbReference>
<dbReference type="Gene3D" id="3.30.930.10">
    <property type="entry name" value="Bira Bifunctional Protein, Domain 2"/>
    <property type="match status" value="1"/>
</dbReference>
<dbReference type="Gene3D" id="3.30.980.10">
    <property type="entry name" value="Threonyl-trna Synthetase, Chain A, domain 2"/>
    <property type="match status" value="1"/>
</dbReference>
<dbReference type="HAMAP" id="MF_00184">
    <property type="entry name" value="Thr_tRNA_synth"/>
    <property type="match status" value="1"/>
</dbReference>
<dbReference type="InterPro" id="IPR002314">
    <property type="entry name" value="aa-tRNA-synt_IIb"/>
</dbReference>
<dbReference type="InterPro" id="IPR006195">
    <property type="entry name" value="aa-tRNA-synth_II"/>
</dbReference>
<dbReference type="InterPro" id="IPR045864">
    <property type="entry name" value="aa-tRNA-synth_II/BPL/LPL"/>
</dbReference>
<dbReference type="InterPro" id="IPR004154">
    <property type="entry name" value="Anticodon-bd"/>
</dbReference>
<dbReference type="InterPro" id="IPR036621">
    <property type="entry name" value="Anticodon-bd_dom_sf"/>
</dbReference>
<dbReference type="InterPro" id="IPR012675">
    <property type="entry name" value="Beta-grasp_dom_sf"/>
</dbReference>
<dbReference type="InterPro" id="IPR004095">
    <property type="entry name" value="TGS"/>
</dbReference>
<dbReference type="InterPro" id="IPR012676">
    <property type="entry name" value="TGS-like"/>
</dbReference>
<dbReference type="InterPro" id="IPR002320">
    <property type="entry name" value="Thr-tRNA-ligase_IIa"/>
</dbReference>
<dbReference type="InterPro" id="IPR018163">
    <property type="entry name" value="Thr/Ala-tRNA-synth_IIc_edit"/>
</dbReference>
<dbReference type="InterPro" id="IPR047246">
    <property type="entry name" value="ThrRS_anticodon"/>
</dbReference>
<dbReference type="InterPro" id="IPR033728">
    <property type="entry name" value="ThrRS_core"/>
</dbReference>
<dbReference type="InterPro" id="IPR012947">
    <property type="entry name" value="tRNA_SAD"/>
</dbReference>
<dbReference type="NCBIfam" id="TIGR00418">
    <property type="entry name" value="thrS"/>
    <property type="match status" value="1"/>
</dbReference>
<dbReference type="PANTHER" id="PTHR11451:SF44">
    <property type="entry name" value="THREONINE--TRNA LIGASE, CHLOROPLASTIC_MITOCHONDRIAL 2"/>
    <property type="match status" value="1"/>
</dbReference>
<dbReference type="PANTHER" id="PTHR11451">
    <property type="entry name" value="THREONINE-TRNA LIGASE"/>
    <property type="match status" value="1"/>
</dbReference>
<dbReference type="Pfam" id="PF03129">
    <property type="entry name" value="HGTP_anticodon"/>
    <property type="match status" value="1"/>
</dbReference>
<dbReference type="Pfam" id="PF02824">
    <property type="entry name" value="TGS"/>
    <property type="match status" value="1"/>
</dbReference>
<dbReference type="Pfam" id="PF00587">
    <property type="entry name" value="tRNA-synt_2b"/>
    <property type="match status" value="1"/>
</dbReference>
<dbReference type="Pfam" id="PF07973">
    <property type="entry name" value="tRNA_SAD"/>
    <property type="match status" value="1"/>
</dbReference>
<dbReference type="PRINTS" id="PR01047">
    <property type="entry name" value="TRNASYNTHTHR"/>
</dbReference>
<dbReference type="SMART" id="SM00863">
    <property type="entry name" value="tRNA_SAD"/>
    <property type="match status" value="1"/>
</dbReference>
<dbReference type="SUPFAM" id="SSF52954">
    <property type="entry name" value="Class II aaRS ABD-related"/>
    <property type="match status" value="1"/>
</dbReference>
<dbReference type="SUPFAM" id="SSF55681">
    <property type="entry name" value="Class II aaRS and biotin synthetases"/>
    <property type="match status" value="1"/>
</dbReference>
<dbReference type="SUPFAM" id="SSF81271">
    <property type="entry name" value="TGS-like"/>
    <property type="match status" value="1"/>
</dbReference>
<dbReference type="SUPFAM" id="SSF55186">
    <property type="entry name" value="ThrRS/AlaRS common domain"/>
    <property type="match status" value="1"/>
</dbReference>
<dbReference type="PROSITE" id="PS50862">
    <property type="entry name" value="AA_TRNA_LIGASE_II"/>
    <property type="match status" value="1"/>
</dbReference>
<dbReference type="PROSITE" id="PS51880">
    <property type="entry name" value="TGS"/>
    <property type="match status" value="1"/>
</dbReference>
<name>SYT_ZYMMO</name>
<protein>
    <recommendedName>
        <fullName evidence="1">Threonine--tRNA ligase</fullName>
        <ecNumber evidence="1">6.1.1.3</ecNumber>
    </recommendedName>
    <alternativeName>
        <fullName evidence="1">Threonyl-tRNA synthetase</fullName>
        <shortName evidence="1">ThrRS</shortName>
    </alternativeName>
</protein>
<reference key="1">
    <citation type="journal article" date="2005" name="Nat. Biotechnol.">
        <title>The genome sequence of the ethanologenic bacterium Zymomonas mobilis ZM4.</title>
        <authorList>
            <person name="Seo J.-S."/>
            <person name="Chong H."/>
            <person name="Park H.S."/>
            <person name="Yoon K.-O."/>
            <person name="Jung C."/>
            <person name="Kim J.J."/>
            <person name="Hong J.H."/>
            <person name="Kim H."/>
            <person name="Kim J.-H."/>
            <person name="Kil J.-I."/>
            <person name="Park C.J."/>
            <person name="Oh H.-M."/>
            <person name="Lee J.-S."/>
            <person name="Jin S.-J."/>
            <person name="Um H.-W."/>
            <person name="Lee H.-J."/>
            <person name="Oh S.-J."/>
            <person name="Kim J.Y."/>
            <person name="Kang H.L."/>
            <person name="Lee S.Y."/>
            <person name="Lee K.J."/>
            <person name="Kang H.S."/>
        </authorList>
    </citation>
    <scope>NUCLEOTIDE SEQUENCE [LARGE SCALE GENOMIC DNA]</scope>
    <source>
        <strain>ATCC 31821 / ZM4 / CP4</strain>
    </source>
</reference>
<evidence type="ECO:0000255" key="1">
    <source>
        <dbReference type="HAMAP-Rule" id="MF_00184"/>
    </source>
</evidence>
<evidence type="ECO:0000255" key="2">
    <source>
        <dbReference type="PROSITE-ProRule" id="PRU01228"/>
    </source>
</evidence>
<feature type="chain" id="PRO_0000101096" description="Threonine--tRNA ligase">
    <location>
        <begin position="1"/>
        <end position="659"/>
    </location>
</feature>
<feature type="domain" description="TGS" evidence="2">
    <location>
        <begin position="3"/>
        <end position="64"/>
    </location>
</feature>
<feature type="region of interest" description="Catalytic" evidence="1">
    <location>
        <begin position="249"/>
        <end position="555"/>
    </location>
</feature>
<feature type="binding site" evidence="1">
    <location>
        <position position="354"/>
    </location>
    <ligand>
        <name>Zn(2+)</name>
        <dbReference type="ChEBI" id="CHEBI:29105"/>
    </ligand>
</feature>
<feature type="binding site" evidence="1">
    <location>
        <position position="405"/>
    </location>
    <ligand>
        <name>Zn(2+)</name>
        <dbReference type="ChEBI" id="CHEBI:29105"/>
    </ligand>
</feature>
<feature type="binding site" evidence="1">
    <location>
        <position position="532"/>
    </location>
    <ligand>
        <name>Zn(2+)</name>
        <dbReference type="ChEBI" id="CHEBI:29105"/>
    </ligand>
</feature>
<proteinExistence type="inferred from homology"/>
<comment type="function">
    <text evidence="1">Catalyzes the attachment of threonine to tRNA(Thr) in a two-step reaction: L-threonine is first activated by ATP to form Thr-AMP and then transferred to the acceptor end of tRNA(Thr). Also edits incorrectly charged L-seryl-tRNA(Thr).</text>
</comment>
<comment type="catalytic activity">
    <reaction evidence="1">
        <text>tRNA(Thr) + L-threonine + ATP = L-threonyl-tRNA(Thr) + AMP + diphosphate + H(+)</text>
        <dbReference type="Rhea" id="RHEA:24624"/>
        <dbReference type="Rhea" id="RHEA-COMP:9670"/>
        <dbReference type="Rhea" id="RHEA-COMP:9704"/>
        <dbReference type="ChEBI" id="CHEBI:15378"/>
        <dbReference type="ChEBI" id="CHEBI:30616"/>
        <dbReference type="ChEBI" id="CHEBI:33019"/>
        <dbReference type="ChEBI" id="CHEBI:57926"/>
        <dbReference type="ChEBI" id="CHEBI:78442"/>
        <dbReference type="ChEBI" id="CHEBI:78534"/>
        <dbReference type="ChEBI" id="CHEBI:456215"/>
        <dbReference type="EC" id="6.1.1.3"/>
    </reaction>
</comment>
<comment type="cofactor">
    <cofactor evidence="1">
        <name>Zn(2+)</name>
        <dbReference type="ChEBI" id="CHEBI:29105"/>
    </cofactor>
    <text evidence="1">Binds 1 zinc ion per subunit.</text>
</comment>
<comment type="subunit">
    <text evidence="1">Homodimer.</text>
</comment>
<comment type="subcellular location">
    <subcellularLocation>
        <location evidence="1">Cytoplasm</location>
    </subcellularLocation>
</comment>
<comment type="similarity">
    <text evidence="1">Belongs to the class-II aminoacyl-tRNA synthetase family.</text>
</comment>
<accession>Q5NPH1</accession>
<organism>
    <name type="scientific">Zymomonas mobilis subsp. mobilis (strain ATCC 31821 / ZM4 / CP4)</name>
    <dbReference type="NCBI Taxonomy" id="264203"/>
    <lineage>
        <taxon>Bacteria</taxon>
        <taxon>Pseudomonadati</taxon>
        <taxon>Pseudomonadota</taxon>
        <taxon>Alphaproteobacteria</taxon>
        <taxon>Sphingomonadales</taxon>
        <taxon>Zymomonadaceae</taxon>
        <taxon>Zymomonas</taxon>
    </lineage>
</organism>
<keyword id="KW-0030">Aminoacyl-tRNA synthetase</keyword>
<keyword id="KW-0067">ATP-binding</keyword>
<keyword id="KW-0963">Cytoplasm</keyword>
<keyword id="KW-0436">Ligase</keyword>
<keyword id="KW-0479">Metal-binding</keyword>
<keyword id="KW-0547">Nucleotide-binding</keyword>
<keyword id="KW-0648">Protein biosynthesis</keyword>
<keyword id="KW-1185">Reference proteome</keyword>
<keyword id="KW-0694">RNA-binding</keyword>
<keyword id="KW-0820">tRNA-binding</keyword>
<keyword id="KW-0862">Zinc</keyword>